<organismHost>
    <name type="scientific">Escherichia coli O157:H7</name>
    <dbReference type="NCBI Taxonomy" id="83334"/>
</organismHost>
<comment type="similarity">
    <text evidence="1">Belongs to the ninE family.</text>
</comment>
<name>NINE_BPVT2</name>
<feature type="chain" id="PRO_0000077620" description="Protein ninE">
    <location>
        <begin position="1"/>
        <end position="60"/>
    </location>
</feature>
<proteinExistence type="inferred from homology"/>
<sequence length="60" mass="7526">MRRQRRSITDIICENCKYLPTKRSRNKRKPIPKESDVKTFNYTAHLWDIRWLRHRARKTR</sequence>
<gene>
    <name type="primary">ninE</name>
</gene>
<organism>
    <name type="scientific">Enterobacteria phage VT2-Sa</name>
    <name type="common">Bacteriophage VT2-Sa</name>
    <dbReference type="NCBI Taxonomy" id="97081"/>
    <lineage>
        <taxon>Viruses</taxon>
        <taxon>Duplodnaviria</taxon>
        <taxon>Heunggongvirae</taxon>
        <taxon>Uroviricota</taxon>
        <taxon>Caudoviricetes</taxon>
        <taxon>Sepvirinae</taxon>
        <taxon>Traversvirus</taxon>
        <taxon>Traversvirus II</taxon>
    </lineage>
</organism>
<protein>
    <recommendedName>
        <fullName>Protein ninE</fullName>
    </recommendedName>
</protein>
<evidence type="ECO:0000305" key="1"/>
<reference key="1">
    <citation type="journal article" date="1999" name="DNA Res.">
        <title>Sequence analysis of Stx2-converting phage VT2-Sa shows a great divergence in early regulation and replication regions.</title>
        <authorList>
            <person name="Miyamoto H."/>
            <person name="Nakai W."/>
            <person name="Yajima N."/>
            <person name="Fujibayashi A."/>
            <person name="Higuchi T."/>
            <person name="Sato K."/>
            <person name="Matsushiro A."/>
        </authorList>
    </citation>
    <scope>NUCLEOTIDE SEQUENCE [LARGE SCALE GENOMIC DNA]</scope>
</reference>
<keyword id="KW-1185">Reference proteome</keyword>
<dbReference type="EMBL" id="AP000363">
    <property type="protein sequence ID" value="BAA84316.1"/>
    <property type="molecule type" value="Genomic_DNA"/>
</dbReference>
<dbReference type="RefSeq" id="NP_050532.1">
    <property type="nucleotide sequence ID" value="NC_000902.1"/>
</dbReference>
<dbReference type="KEGG" id="vg:1262280"/>
<dbReference type="OrthoDB" id="23274at10239"/>
<dbReference type="Proteomes" id="UP000002665">
    <property type="component" value="Genome"/>
</dbReference>
<dbReference type="InterPro" id="IPR007986">
    <property type="entry name" value="NINE"/>
</dbReference>
<dbReference type="Pfam" id="PF05322">
    <property type="entry name" value="NinE"/>
    <property type="match status" value="1"/>
</dbReference>
<accession>Q9T1L9</accession>